<evidence type="ECO:0000250" key="1">
    <source>
        <dbReference type="UniProtKB" id="A0A0D4WTV1"/>
    </source>
</evidence>
<evidence type="ECO:0000250" key="2">
    <source>
        <dbReference type="UniProtKB" id="A0A0D4WV12"/>
    </source>
</evidence>
<evidence type="ECO:0000250" key="3">
    <source>
        <dbReference type="UniProtKB" id="P0CE80"/>
    </source>
</evidence>
<evidence type="ECO:0000250" key="4">
    <source>
        <dbReference type="UniProtKB" id="Q4ZFU2"/>
    </source>
</evidence>
<evidence type="ECO:0000250" key="5">
    <source>
        <dbReference type="UniProtKB" id="Q8I914"/>
    </source>
</evidence>
<evidence type="ECO:0000303" key="6">
    <source>
    </source>
</evidence>
<evidence type="ECO:0000305" key="7"/>
<evidence type="ECO:0000305" key="8">
    <source>
    </source>
</evidence>
<protein>
    <recommendedName>
        <fullName evidence="6">Dermonecrotic toxin LlSicTox-alphaIII3ii</fullName>
        <ecNumber evidence="4">4.6.1.-</ecNumber>
    </recommendedName>
    <alternativeName>
        <fullName>Phospholipase D</fullName>
        <shortName>PLD</shortName>
    </alternativeName>
    <alternativeName>
        <fullName>Sphingomyelin phosphodiesterase D</fullName>
        <shortName>SMD</shortName>
        <shortName>SMase D</shortName>
        <shortName>Sphingomyelinase D</shortName>
    </alternativeName>
</protein>
<keyword id="KW-0204">Cytolysis</keyword>
<keyword id="KW-1061">Dermonecrotic toxin</keyword>
<keyword id="KW-1015">Disulfide bond</keyword>
<keyword id="KW-0354">Hemolysis</keyword>
<keyword id="KW-0442">Lipid degradation</keyword>
<keyword id="KW-0443">Lipid metabolism</keyword>
<keyword id="KW-0456">Lyase</keyword>
<keyword id="KW-0460">Magnesium</keyword>
<keyword id="KW-0479">Metal-binding</keyword>
<keyword id="KW-0964">Secreted</keyword>
<keyword id="KW-0800">Toxin</keyword>
<reference key="1">
    <citation type="journal article" date="2009" name="Mol. Biol. Evol.">
        <title>Molecular evolution, functional variation, and proposed nomenclature of the gene family that includes sphingomyelinase D in sicariid spider venoms.</title>
        <authorList>
            <person name="Binford G.J."/>
            <person name="Bodner M.R."/>
            <person name="Cordes M.H."/>
            <person name="Baldwin K.L."/>
            <person name="Rynerson M.R."/>
            <person name="Burns S.N."/>
            <person name="Zobel-Thropp P.A."/>
        </authorList>
    </citation>
    <scope>NUCLEOTIDE SEQUENCE [MRNA]</scope>
    <scope>NOMENCLATURE</scope>
    <source>
        <tissue>Venom gland</tissue>
    </source>
</reference>
<accession>C0JB12</accession>
<dbReference type="EC" id="4.6.1.-" evidence="4"/>
<dbReference type="EMBL" id="FJ171447">
    <property type="protein sequence ID" value="ACN48943.1"/>
    <property type="molecule type" value="mRNA"/>
</dbReference>
<dbReference type="SMR" id="C0JB12"/>
<dbReference type="GO" id="GO:0005576">
    <property type="term" value="C:extracellular region"/>
    <property type="evidence" value="ECO:0007669"/>
    <property type="project" value="UniProtKB-SubCell"/>
</dbReference>
<dbReference type="GO" id="GO:0016829">
    <property type="term" value="F:lyase activity"/>
    <property type="evidence" value="ECO:0007669"/>
    <property type="project" value="UniProtKB-KW"/>
</dbReference>
<dbReference type="GO" id="GO:0046872">
    <property type="term" value="F:metal ion binding"/>
    <property type="evidence" value="ECO:0007669"/>
    <property type="project" value="UniProtKB-KW"/>
</dbReference>
<dbReference type="GO" id="GO:0008081">
    <property type="term" value="F:phosphoric diester hydrolase activity"/>
    <property type="evidence" value="ECO:0007669"/>
    <property type="project" value="InterPro"/>
</dbReference>
<dbReference type="GO" id="GO:0090729">
    <property type="term" value="F:toxin activity"/>
    <property type="evidence" value="ECO:0007669"/>
    <property type="project" value="UniProtKB-KW"/>
</dbReference>
<dbReference type="GO" id="GO:0031640">
    <property type="term" value="P:killing of cells of another organism"/>
    <property type="evidence" value="ECO:0007669"/>
    <property type="project" value="UniProtKB-KW"/>
</dbReference>
<dbReference type="GO" id="GO:0016042">
    <property type="term" value="P:lipid catabolic process"/>
    <property type="evidence" value="ECO:0007669"/>
    <property type="project" value="UniProtKB-KW"/>
</dbReference>
<dbReference type="CDD" id="cd08576">
    <property type="entry name" value="GDPD_like_SMaseD_PLD"/>
    <property type="match status" value="1"/>
</dbReference>
<dbReference type="Gene3D" id="3.20.20.190">
    <property type="entry name" value="Phosphatidylinositol (PI) phosphodiesterase"/>
    <property type="match status" value="1"/>
</dbReference>
<dbReference type="InterPro" id="IPR017946">
    <property type="entry name" value="PLC-like_Pdiesterase_TIM-brl"/>
</dbReference>
<dbReference type="SUPFAM" id="SSF51695">
    <property type="entry name" value="PLC-like phosphodiesterases"/>
    <property type="match status" value="1"/>
</dbReference>
<organism>
    <name type="scientific">Loxosceles laeta</name>
    <name type="common">South American recluse spider</name>
    <name type="synonym">Scytodes laeta</name>
    <dbReference type="NCBI Taxonomy" id="58217"/>
    <lineage>
        <taxon>Eukaryota</taxon>
        <taxon>Metazoa</taxon>
        <taxon>Ecdysozoa</taxon>
        <taxon>Arthropoda</taxon>
        <taxon>Chelicerata</taxon>
        <taxon>Arachnida</taxon>
        <taxon>Araneae</taxon>
        <taxon>Araneomorphae</taxon>
        <taxon>Haplogynae</taxon>
        <taxon>Scytodoidea</taxon>
        <taxon>Sicariidae</taxon>
        <taxon>Loxosceles</taxon>
    </lineage>
</organism>
<sequence>WLMGHMVNAVKQIPTFLNDGANAIEADITFKGAVPTYSYHGTPCDFGRDCIRWEYFDVFLQTLRDYTTPGNSKYYEKFILFVLDLKTGSLNNNEVRKAGENVAKGLLKNYWNDGNSGGRAYVVLSLPDIAHYEFIRTFKEVLKAEGHEDLLDKVGYDLSGPYLPSLPSLDSVHEAFKKAGVDGHVWLSDGLTNWAPLGDMARLKEIVKRRDSENGFISKVYYWSVDRYSTTRTALDVGVDGIMTNFPYVIIDVLNENGYKDKYRLATYDDNPWETFKK</sequence>
<proteinExistence type="evidence at transcript level"/>
<name>A332_LOXLA</name>
<feature type="chain" id="PRO_0000392827" description="Dermonecrotic toxin LlSicTox-alphaIII3ii">
    <location>
        <begin position="1" status="less than"/>
        <end position="278"/>
    </location>
</feature>
<feature type="active site" evidence="5">
    <location>
        <position position="5"/>
    </location>
</feature>
<feature type="active site" description="Nucleophile" evidence="5">
    <location>
        <position position="40"/>
    </location>
</feature>
<feature type="binding site" evidence="5">
    <location>
        <position position="25"/>
    </location>
    <ligand>
        <name>Mg(2+)</name>
        <dbReference type="ChEBI" id="CHEBI:18420"/>
    </ligand>
</feature>
<feature type="binding site" evidence="5">
    <location>
        <position position="27"/>
    </location>
    <ligand>
        <name>Mg(2+)</name>
        <dbReference type="ChEBI" id="CHEBI:18420"/>
    </ligand>
</feature>
<feature type="binding site" evidence="5">
    <location>
        <position position="84"/>
    </location>
    <ligand>
        <name>Mg(2+)</name>
        <dbReference type="ChEBI" id="CHEBI:18420"/>
    </ligand>
</feature>
<feature type="disulfide bond" evidence="5">
    <location>
        <begin position="44"/>
        <end position="50"/>
    </location>
</feature>
<feature type="non-terminal residue">
    <location>
        <position position="1"/>
    </location>
</feature>
<comment type="function">
    <text evidence="1 3">Dermonecrotic toxins cleave the phosphodiester linkage between the phosphate and headgroup of certain phospholipids (sphingolipid and lysolipid substrates), forming an alcohol (often choline) and a cyclic phosphate (By similarity). This toxin acts on sphingomyelin (SM) (By similarity). It may also act on ceramide phosphoethanolamine (CPE), lysophosphatidylcholine (LPC) and lysophosphatidylethanolamine (LPE), but not on lysophosphatidylserine (LPS), and lysophosphatidylglycerol (LPG) (By similarity). It acts by transphosphatidylation, releasing exclusively cyclic phosphate products as second products (By similarity). Induces dermonecrosis, hemolysis, increased vascular permeability, edema, inflammatory response, and platelet aggregation (By similarity).</text>
</comment>
<comment type="catalytic activity">
    <reaction evidence="1">
        <text>an N-(acyl)-sphingosylphosphocholine = an N-(acyl)-sphingosyl-1,3-cyclic phosphate + choline</text>
        <dbReference type="Rhea" id="RHEA:60652"/>
        <dbReference type="ChEBI" id="CHEBI:15354"/>
        <dbReference type="ChEBI" id="CHEBI:64583"/>
        <dbReference type="ChEBI" id="CHEBI:143892"/>
    </reaction>
</comment>
<comment type="catalytic activity">
    <reaction evidence="1">
        <text>an N-(acyl)-sphingosylphosphoethanolamine = an N-(acyl)-sphingosyl-1,3-cyclic phosphate + ethanolamine</text>
        <dbReference type="Rhea" id="RHEA:60648"/>
        <dbReference type="ChEBI" id="CHEBI:57603"/>
        <dbReference type="ChEBI" id="CHEBI:143891"/>
        <dbReference type="ChEBI" id="CHEBI:143892"/>
    </reaction>
</comment>
<comment type="catalytic activity">
    <reaction evidence="1">
        <text>a 1-acyl-sn-glycero-3-phosphocholine = a 1-acyl-sn-glycero-2,3-cyclic phosphate + choline</text>
        <dbReference type="Rhea" id="RHEA:60700"/>
        <dbReference type="ChEBI" id="CHEBI:15354"/>
        <dbReference type="ChEBI" id="CHEBI:58168"/>
        <dbReference type="ChEBI" id="CHEBI:143947"/>
    </reaction>
</comment>
<comment type="catalytic activity">
    <reaction evidence="1">
        <text>a 1-acyl-sn-glycero-3-phosphoethanolamine = a 1-acyl-sn-glycero-2,3-cyclic phosphate + ethanolamine</text>
        <dbReference type="Rhea" id="RHEA:60704"/>
        <dbReference type="ChEBI" id="CHEBI:57603"/>
        <dbReference type="ChEBI" id="CHEBI:64381"/>
        <dbReference type="ChEBI" id="CHEBI:143947"/>
    </reaction>
</comment>
<comment type="cofactor">
    <cofactor evidence="5">
        <name>Mg(2+)</name>
        <dbReference type="ChEBI" id="CHEBI:18420"/>
    </cofactor>
    <text evidence="5">Binds 1 Mg(2+) ion per subunit.</text>
</comment>
<comment type="subcellular location">
    <subcellularLocation>
        <location evidence="8">Secreted</location>
    </subcellularLocation>
</comment>
<comment type="tissue specificity">
    <text evidence="8">Expressed by the venom gland.</text>
</comment>
<comment type="similarity">
    <text evidence="7">Belongs to the arthropod phospholipase D family. Class I subfamily.</text>
</comment>
<comment type="caution">
    <text evidence="1 2 4">The most common activity assay for dermonecrotic toxins detects enzymatic activity by monitoring choline release from substrate. Liberation of choline from sphingomyelin (SM) or lysophosphatidylcholine (LPC) is commonly assumed to result from substrate hydrolysis, giving either ceramide-1-phosphate (C1P) or lysophosphatidic acid (LPA), respectively, as a second product. However, two studies from Lajoie and colleagues (2013 and 2015) report the observation of exclusive formation of cyclic phosphate products as second products, resulting from intramolecular transphosphatidylation. Cyclic phosphates have vastly different biological properties from their monoester counterparts, and they may be relevant to the pathology of brown spider envenomation.</text>
</comment>